<feature type="chain" id="PRO_0000443807" description="Putative receptor like protein 25">
    <location>
        <begin position="1"/>
        <end position="218"/>
    </location>
</feature>
<feature type="topological domain" description="Extracellular" evidence="1">
    <location>
        <begin position="1"/>
        <end position="178"/>
    </location>
</feature>
<feature type="transmembrane region" description="Helical" evidence="1">
    <location>
        <begin position="179"/>
        <end position="199"/>
    </location>
</feature>
<feature type="topological domain" description="Cytoplasmic" evidence="1">
    <location>
        <begin position="200"/>
        <end position="218"/>
    </location>
</feature>
<feature type="repeat" description="LRR 1" evidence="1">
    <location>
        <begin position="34"/>
        <end position="58"/>
    </location>
</feature>
<feature type="repeat" description="LRR 2" evidence="1">
    <location>
        <begin position="59"/>
        <end position="82"/>
    </location>
</feature>
<feature type="repeat" description="LRR 3" evidence="1">
    <location>
        <begin position="83"/>
        <end position="106"/>
    </location>
</feature>
<feature type="repeat" description="LRR 4" evidence="1">
    <location>
        <begin position="108"/>
        <end position="131"/>
    </location>
</feature>
<feature type="glycosylation site" description="N-linked (GlcNAc...) asparagine" evidence="2">
    <location>
        <position position="65"/>
    </location>
</feature>
<feature type="glycosylation site" description="N-linked (GlcNAc...) asparagine" evidence="2">
    <location>
        <position position="113"/>
    </location>
</feature>
<accession>O48763</accession>
<protein>
    <recommendedName>
        <fullName evidence="3">Putative receptor like protein 25</fullName>
        <shortName evidence="3">AtRLP25</shortName>
    </recommendedName>
</protein>
<dbReference type="EMBL" id="AC002334">
    <property type="protein sequence ID" value="AAC04917.2"/>
    <property type="molecule type" value="Genomic_DNA"/>
</dbReference>
<dbReference type="EMBL" id="AC003033">
    <property type="protein sequence ID" value="AAM14861.1"/>
    <property type="molecule type" value="Genomic_DNA"/>
</dbReference>
<dbReference type="EMBL" id="CP002685">
    <property type="protein sequence ID" value="AEC08776.1"/>
    <property type="molecule type" value="Genomic_DNA"/>
</dbReference>
<dbReference type="PIR" id="E84740">
    <property type="entry name" value="E84740"/>
</dbReference>
<dbReference type="PIR" id="T01104">
    <property type="entry name" value="T01104"/>
</dbReference>
<dbReference type="RefSeq" id="NP_180862.1">
    <property type="nucleotide sequence ID" value="NM_128863.1"/>
</dbReference>
<dbReference type="SMR" id="O48763"/>
<dbReference type="FunCoup" id="O48763">
    <property type="interactions" value="5"/>
</dbReference>
<dbReference type="STRING" id="3702.O48763"/>
<dbReference type="GlyCosmos" id="O48763">
    <property type="glycosylation" value="2 sites, No reported glycans"/>
</dbReference>
<dbReference type="GlyGen" id="O48763">
    <property type="glycosylation" value="2 sites"/>
</dbReference>
<dbReference type="PaxDb" id="3702-AT2G33030.1"/>
<dbReference type="EnsemblPlants" id="AT2G33030.1">
    <property type="protein sequence ID" value="AT2G33030.1"/>
    <property type="gene ID" value="AT2G33030"/>
</dbReference>
<dbReference type="GeneID" id="817865"/>
<dbReference type="Gramene" id="AT2G33030.1">
    <property type="protein sequence ID" value="AT2G33030.1"/>
    <property type="gene ID" value="AT2G33030"/>
</dbReference>
<dbReference type="KEGG" id="ath:AT2G33030"/>
<dbReference type="Araport" id="AT2G33030"/>
<dbReference type="TAIR" id="AT2G33030">
    <property type="gene designation" value="RLP25"/>
</dbReference>
<dbReference type="eggNOG" id="KOG0619">
    <property type="taxonomic scope" value="Eukaryota"/>
</dbReference>
<dbReference type="HOGENOM" id="CLU_000288_18_11_1"/>
<dbReference type="InParanoid" id="O48763"/>
<dbReference type="OMA" id="YESIRFS"/>
<dbReference type="PhylomeDB" id="O48763"/>
<dbReference type="Proteomes" id="UP000006548">
    <property type="component" value="Chromosome 2"/>
</dbReference>
<dbReference type="ExpressionAtlas" id="O48763">
    <property type="expression patterns" value="baseline and differential"/>
</dbReference>
<dbReference type="GO" id="GO:0005886">
    <property type="term" value="C:plasma membrane"/>
    <property type="evidence" value="ECO:0007669"/>
    <property type="project" value="UniProtKB-SubCell"/>
</dbReference>
<dbReference type="FunFam" id="3.80.10.10:FF:000111">
    <property type="entry name" value="LRR receptor-like serine/threonine-protein kinase ERECTA"/>
    <property type="match status" value="1"/>
</dbReference>
<dbReference type="Gene3D" id="3.80.10.10">
    <property type="entry name" value="Ribonuclease Inhibitor"/>
    <property type="match status" value="1"/>
</dbReference>
<dbReference type="InterPro" id="IPR001611">
    <property type="entry name" value="Leu-rich_rpt"/>
</dbReference>
<dbReference type="InterPro" id="IPR032675">
    <property type="entry name" value="LRR_dom_sf"/>
</dbReference>
<dbReference type="PANTHER" id="PTHR27004:SF195">
    <property type="entry name" value="RECEPTOR LIKE PROTEIN 28-RELATED"/>
    <property type="match status" value="1"/>
</dbReference>
<dbReference type="PANTHER" id="PTHR27004">
    <property type="entry name" value="RECEPTOR-LIKE PROTEIN 12 ISOFORM X1"/>
    <property type="match status" value="1"/>
</dbReference>
<dbReference type="Pfam" id="PF00560">
    <property type="entry name" value="LRR_1"/>
    <property type="match status" value="3"/>
</dbReference>
<dbReference type="SUPFAM" id="SSF52058">
    <property type="entry name" value="L domain-like"/>
    <property type="match status" value="1"/>
</dbReference>
<name>RLP25_ARATH</name>
<reference key="1">
    <citation type="journal article" date="1999" name="Nature">
        <title>Sequence and analysis of chromosome 2 of the plant Arabidopsis thaliana.</title>
        <authorList>
            <person name="Lin X."/>
            <person name="Kaul S."/>
            <person name="Rounsley S.D."/>
            <person name="Shea T.P."/>
            <person name="Benito M.-I."/>
            <person name="Town C.D."/>
            <person name="Fujii C.Y."/>
            <person name="Mason T.M."/>
            <person name="Bowman C.L."/>
            <person name="Barnstead M.E."/>
            <person name="Feldblyum T.V."/>
            <person name="Buell C.R."/>
            <person name="Ketchum K.A."/>
            <person name="Lee J.J."/>
            <person name="Ronning C.M."/>
            <person name="Koo H.L."/>
            <person name="Moffat K.S."/>
            <person name="Cronin L.A."/>
            <person name="Shen M."/>
            <person name="Pai G."/>
            <person name="Van Aken S."/>
            <person name="Umayam L."/>
            <person name="Tallon L.J."/>
            <person name="Gill J.E."/>
            <person name="Adams M.D."/>
            <person name="Carrera A.J."/>
            <person name="Creasy T.H."/>
            <person name="Goodman H.M."/>
            <person name="Somerville C.R."/>
            <person name="Copenhaver G.P."/>
            <person name="Preuss D."/>
            <person name="Nierman W.C."/>
            <person name="White O."/>
            <person name="Eisen J.A."/>
            <person name="Salzberg S.L."/>
            <person name="Fraser C.M."/>
            <person name="Venter J.C."/>
        </authorList>
    </citation>
    <scope>NUCLEOTIDE SEQUENCE [LARGE SCALE GENOMIC DNA]</scope>
    <source>
        <strain>cv. Columbia</strain>
    </source>
</reference>
<reference key="2">
    <citation type="journal article" date="2017" name="Plant J.">
        <title>Araport11: a complete reannotation of the Arabidopsis thaliana reference genome.</title>
        <authorList>
            <person name="Cheng C.Y."/>
            <person name="Krishnakumar V."/>
            <person name="Chan A.P."/>
            <person name="Thibaud-Nissen F."/>
            <person name="Schobel S."/>
            <person name="Town C.D."/>
        </authorList>
    </citation>
    <scope>GENOME REANNOTATION</scope>
    <source>
        <strain>cv. Columbia</strain>
    </source>
</reference>
<reference key="3">
    <citation type="journal article" date="2005" name="Plant Physiol.">
        <title>Phylogenomic analysis of the receptor-like proteins of rice and Arabidopsis.</title>
        <authorList>
            <person name="Fritz-Laylin L.K."/>
            <person name="Krishnamurthy N."/>
            <person name="Toer M."/>
            <person name="Sjoelander K.V."/>
            <person name="Jones J.D."/>
        </authorList>
    </citation>
    <scope>GENE FAMILY</scope>
</reference>
<reference key="4">
    <citation type="journal article" date="2008" name="Plant Physiol.">
        <title>A genome-wide functional investigation into the roles of receptor-like proteins in Arabidopsis.</title>
        <authorList>
            <person name="Wang G."/>
            <person name="Ellendorff U."/>
            <person name="Kemp B."/>
            <person name="Mansfield J.W."/>
            <person name="Forsyth A."/>
            <person name="Mitchell K."/>
            <person name="Bastas K."/>
            <person name="Liu C.-M."/>
            <person name="Woods-Toer A."/>
            <person name="Zipfel C."/>
            <person name="de Wit P.J.G.M."/>
            <person name="Jones J.D.G."/>
            <person name="Toer M."/>
            <person name="Thomma B.P.H.J."/>
        </authorList>
    </citation>
    <scope>GENE FAMILY</scope>
    <scope>NOMENCLATURE</scope>
</reference>
<proteinExistence type="uncertain"/>
<comment type="subcellular location">
    <subcellularLocation>
        <location evidence="4">Cell membrane</location>
        <topology evidence="4">Single-pass type I membrane protein</topology>
    </subcellularLocation>
</comment>
<comment type="similarity">
    <text evidence="4">Belongs to the RLP family.</text>
</comment>
<comment type="caution">
    <text evidence="4">Could be the product of a pseudogene. Lacks the signal peptide and part of the extracellular leucine-rich repeats that are required for the specificity of the elicitor protein recognition, which are conserved features of the family.</text>
</comment>
<keyword id="KW-1003">Cell membrane</keyword>
<keyword id="KW-0325">Glycoprotein</keyword>
<keyword id="KW-0433">Leucine-rich repeat</keyword>
<keyword id="KW-0472">Membrane</keyword>
<keyword id="KW-0675">Receptor</keyword>
<keyword id="KW-1185">Reference proteome</keyword>
<keyword id="KW-0677">Repeat</keyword>
<keyword id="KW-0812">Transmembrane</keyword>
<keyword id="KW-1133">Transmembrane helix</keyword>
<gene>
    <name evidence="3" type="primary">RLP25</name>
    <name evidence="5" type="ordered locus">At2g33030</name>
    <name evidence="6" type="ORF">F25I18.23</name>
    <name evidence="7" type="ORF">T21L14.3</name>
</gene>
<evidence type="ECO:0000255" key="1"/>
<evidence type="ECO:0000255" key="2">
    <source>
        <dbReference type="PROSITE-ProRule" id="PRU00498"/>
    </source>
</evidence>
<evidence type="ECO:0000303" key="3">
    <source>
    </source>
</evidence>
<evidence type="ECO:0000305" key="4"/>
<evidence type="ECO:0000312" key="5">
    <source>
        <dbReference type="Araport" id="AT2G33030"/>
    </source>
</evidence>
<evidence type="ECO:0000312" key="6">
    <source>
        <dbReference type="EMBL" id="AAC04917.2"/>
    </source>
</evidence>
<evidence type="ECO:0000312" key="7">
    <source>
        <dbReference type="EMBL" id="AAM14861.1"/>
    </source>
</evidence>
<organism>
    <name type="scientific">Arabidopsis thaliana</name>
    <name type="common">Mouse-ear cress</name>
    <dbReference type="NCBI Taxonomy" id="3702"/>
    <lineage>
        <taxon>Eukaryota</taxon>
        <taxon>Viridiplantae</taxon>
        <taxon>Streptophyta</taxon>
        <taxon>Embryophyta</taxon>
        <taxon>Tracheophyta</taxon>
        <taxon>Spermatophyta</taxon>
        <taxon>Magnoliopsida</taxon>
        <taxon>eudicotyledons</taxon>
        <taxon>Gunneridae</taxon>
        <taxon>Pentapetalae</taxon>
        <taxon>rosids</taxon>
        <taxon>malvids</taxon>
        <taxon>Brassicales</taxon>
        <taxon>Brassicaceae</taxon>
        <taxon>Camelineae</taxon>
        <taxon>Arabidopsis</taxon>
    </lineage>
</organism>
<sequence length="218" mass="23953">MIYTKNAYGSISYTYQDFIDLRYKGLHMEQKRILTLYSAIDFSGNRLEGQIPESIGLLKALIALNLSNNAFIGNIPMSMANLIELESLDMSRNGLSGTIPQGLKTLSFLGYINVSHNQLKGEIPQGTQITGPPKSSFEGNAGLCGLPLEESCFGTKVPPIQQSKKEDNQEDAKVLNWKAVATGYGPGVFFGLAIAQIIASYKPEWLVKIIGPNKRRNH</sequence>